<dbReference type="EC" id="2.8.4.3" evidence="1"/>
<dbReference type="EMBL" id="CP001191">
    <property type="protein sequence ID" value="ACI53322.1"/>
    <property type="molecule type" value="Genomic_DNA"/>
</dbReference>
<dbReference type="RefSeq" id="WP_012556374.1">
    <property type="nucleotide sequence ID" value="NC_011369.1"/>
</dbReference>
<dbReference type="SMR" id="B5ZMY1"/>
<dbReference type="STRING" id="395492.Rleg2_0019"/>
<dbReference type="KEGG" id="rlt:Rleg2_0019"/>
<dbReference type="eggNOG" id="COG0621">
    <property type="taxonomic scope" value="Bacteria"/>
</dbReference>
<dbReference type="HOGENOM" id="CLU_018697_2_2_5"/>
<dbReference type="Proteomes" id="UP000008330">
    <property type="component" value="Chromosome"/>
</dbReference>
<dbReference type="GO" id="GO:0005829">
    <property type="term" value="C:cytosol"/>
    <property type="evidence" value="ECO:0007669"/>
    <property type="project" value="TreeGrafter"/>
</dbReference>
<dbReference type="GO" id="GO:0051539">
    <property type="term" value="F:4 iron, 4 sulfur cluster binding"/>
    <property type="evidence" value="ECO:0007669"/>
    <property type="project" value="UniProtKB-UniRule"/>
</dbReference>
<dbReference type="GO" id="GO:0046872">
    <property type="term" value="F:metal ion binding"/>
    <property type="evidence" value="ECO:0007669"/>
    <property type="project" value="UniProtKB-KW"/>
</dbReference>
<dbReference type="GO" id="GO:0035597">
    <property type="term" value="F:N6-isopentenyladenosine methylthiotransferase activity"/>
    <property type="evidence" value="ECO:0007669"/>
    <property type="project" value="TreeGrafter"/>
</dbReference>
<dbReference type="CDD" id="cd01335">
    <property type="entry name" value="Radical_SAM"/>
    <property type="match status" value="1"/>
</dbReference>
<dbReference type="FunFam" id="3.40.50.12160:FF:000001">
    <property type="entry name" value="tRNA-2-methylthio-N(6)-dimethylallyladenosine synthase"/>
    <property type="match status" value="1"/>
</dbReference>
<dbReference type="FunFam" id="3.80.30.20:FF:000001">
    <property type="entry name" value="tRNA-2-methylthio-N(6)-dimethylallyladenosine synthase 2"/>
    <property type="match status" value="1"/>
</dbReference>
<dbReference type="Gene3D" id="3.40.50.12160">
    <property type="entry name" value="Methylthiotransferase, N-terminal domain"/>
    <property type="match status" value="1"/>
</dbReference>
<dbReference type="Gene3D" id="3.80.30.20">
    <property type="entry name" value="tm_1862 like domain"/>
    <property type="match status" value="1"/>
</dbReference>
<dbReference type="HAMAP" id="MF_01864">
    <property type="entry name" value="tRNA_metthiotr_MiaB"/>
    <property type="match status" value="1"/>
</dbReference>
<dbReference type="InterPro" id="IPR006638">
    <property type="entry name" value="Elp3/MiaA/NifB-like_rSAM"/>
</dbReference>
<dbReference type="InterPro" id="IPR005839">
    <property type="entry name" value="Methylthiotransferase"/>
</dbReference>
<dbReference type="InterPro" id="IPR020612">
    <property type="entry name" value="Methylthiotransferase_CS"/>
</dbReference>
<dbReference type="InterPro" id="IPR013848">
    <property type="entry name" value="Methylthiotransferase_N"/>
</dbReference>
<dbReference type="InterPro" id="IPR038135">
    <property type="entry name" value="Methylthiotransferase_N_sf"/>
</dbReference>
<dbReference type="InterPro" id="IPR006463">
    <property type="entry name" value="MiaB_methiolase"/>
</dbReference>
<dbReference type="InterPro" id="IPR007197">
    <property type="entry name" value="rSAM"/>
</dbReference>
<dbReference type="InterPro" id="IPR023404">
    <property type="entry name" value="rSAM_horseshoe"/>
</dbReference>
<dbReference type="InterPro" id="IPR002792">
    <property type="entry name" value="TRAM_dom"/>
</dbReference>
<dbReference type="NCBIfam" id="TIGR01574">
    <property type="entry name" value="miaB-methiolase"/>
    <property type="match status" value="1"/>
</dbReference>
<dbReference type="NCBIfam" id="TIGR00089">
    <property type="entry name" value="MiaB/RimO family radical SAM methylthiotransferase"/>
    <property type="match status" value="1"/>
</dbReference>
<dbReference type="PANTHER" id="PTHR43020">
    <property type="entry name" value="CDK5 REGULATORY SUBUNIT-ASSOCIATED PROTEIN 1"/>
    <property type="match status" value="1"/>
</dbReference>
<dbReference type="PANTHER" id="PTHR43020:SF2">
    <property type="entry name" value="MITOCHONDRIAL TRNA METHYLTHIOTRANSFERASE CDK5RAP1"/>
    <property type="match status" value="1"/>
</dbReference>
<dbReference type="Pfam" id="PF04055">
    <property type="entry name" value="Radical_SAM"/>
    <property type="match status" value="1"/>
</dbReference>
<dbReference type="Pfam" id="PF01938">
    <property type="entry name" value="TRAM"/>
    <property type="match status" value="1"/>
</dbReference>
<dbReference type="Pfam" id="PF00919">
    <property type="entry name" value="UPF0004"/>
    <property type="match status" value="1"/>
</dbReference>
<dbReference type="SFLD" id="SFLDF00273">
    <property type="entry name" value="(dimethylallyl)adenosine_tRNA"/>
    <property type="match status" value="1"/>
</dbReference>
<dbReference type="SFLD" id="SFLDG01082">
    <property type="entry name" value="B12-binding_domain_containing"/>
    <property type="match status" value="1"/>
</dbReference>
<dbReference type="SFLD" id="SFLDS00029">
    <property type="entry name" value="Radical_SAM"/>
    <property type="match status" value="1"/>
</dbReference>
<dbReference type="SMART" id="SM00729">
    <property type="entry name" value="Elp3"/>
    <property type="match status" value="1"/>
</dbReference>
<dbReference type="SUPFAM" id="SSF102114">
    <property type="entry name" value="Radical SAM enzymes"/>
    <property type="match status" value="1"/>
</dbReference>
<dbReference type="PROSITE" id="PS51449">
    <property type="entry name" value="MTTASE_N"/>
    <property type="match status" value="1"/>
</dbReference>
<dbReference type="PROSITE" id="PS01278">
    <property type="entry name" value="MTTASE_RADICAL"/>
    <property type="match status" value="1"/>
</dbReference>
<dbReference type="PROSITE" id="PS51918">
    <property type="entry name" value="RADICAL_SAM"/>
    <property type="match status" value="1"/>
</dbReference>
<dbReference type="PROSITE" id="PS50926">
    <property type="entry name" value="TRAM"/>
    <property type="match status" value="1"/>
</dbReference>
<proteinExistence type="inferred from homology"/>
<feature type="chain" id="PRO_0000374483" description="tRNA-2-methylthio-N(6)-dimethylallyladenosine synthase">
    <location>
        <begin position="1"/>
        <end position="469"/>
    </location>
</feature>
<feature type="domain" description="MTTase N-terminal" evidence="1">
    <location>
        <begin position="22"/>
        <end position="142"/>
    </location>
</feature>
<feature type="domain" description="Radical SAM core" evidence="2">
    <location>
        <begin position="169"/>
        <end position="401"/>
    </location>
</feature>
<feature type="domain" description="TRAM" evidence="1">
    <location>
        <begin position="404"/>
        <end position="466"/>
    </location>
</feature>
<feature type="binding site" evidence="1">
    <location>
        <position position="31"/>
    </location>
    <ligand>
        <name>[4Fe-4S] cluster</name>
        <dbReference type="ChEBI" id="CHEBI:49883"/>
        <label>1</label>
    </ligand>
</feature>
<feature type="binding site" evidence="1">
    <location>
        <position position="67"/>
    </location>
    <ligand>
        <name>[4Fe-4S] cluster</name>
        <dbReference type="ChEBI" id="CHEBI:49883"/>
        <label>1</label>
    </ligand>
</feature>
<feature type="binding site" evidence="1">
    <location>
        <position position="105"/>
    </location>
    <ligand>
        <name>[4Fe-4S] cluster</name>
        <dbReference type="ChEBI" id="CHEBI:49883"/>
        <label>1</label>
    </ligand>
</feature>
<feature type="binding site" evidence="1">
    <location>
        <position position="183"/>
    </location>
    <ligand>
        <name>[4Fe-4S] cluster</name>
        <dbReference type="ChEBI" id="CHEBI:49883"/>
        <label>2</label>
        <note>4Fe-4S-S-AdoMet</note>
    </ligand>
</feature>
<feature type="binding site" evidence="1">
    <location>
        <position position="187"/>
    </location>
    <ligand>
        <name>[4Fe-4S] cluster</name>
        <dbReference type="ChEBI" id="CHEBI:49883"/>
        <label>2</label>
        <note>4Fe-4S-S-AdoMet</note>
    </ligand>
</feature>
<feature type="binding site" evidence="1">
    <location>
        <position position="190"/>
    </location>
    <ligand>
        <name>[4Fe-4S] cluster</name>
        <dbReference type="ChEBI" id="CHEBI:49883"/>
        <label>2</label>
        <note>4Fe-4S-S-AdoMet</note>
    </ligand>
</feature>
<organism>
    <name type="scientific">Rhizobium leguminosarum bv. trifolii (strain WSM2304)</name>
    <dbReference type="NCBI Taxonomy" id="395492"/>
    <lineage>
        <taxon>Bacteria</taxon>
        <taxon>Pseudomonadati</taxon>
        <taxon>Pseudomonadota</taxon>
        <taxon>Alphaproteobacteria</taxon>
        <taxon>Hyphomicrobiales</taxon>
        <taxon>Rhizobiaceae</taxon>
        <taxon>Rhizobium/Agrobacterium group</taxon>
        <taxon>Rhizobium</taxon>
    </lineage>
</organism>
<name>MIAB_RHILW</name>
<protein>
    <recommendedName>
        <fullName evidence="1">tRNA-2-methylthio-N(6)-dimethylallyladenosine synthase</fullName>
        <ecNumber evidence="1">2.8.4.3</ecNumber>
    </recommendedName>
    <alternativeName>
        <fullName evidence="1">(Dimethylallyl)adenosine tRNA methylthiotransferase MiaB</fullName>
    </alternativeName>
    <alternativeName>
        <fullName evidence="1">tRNA-i(6)A37 methylthiotransferase</fullName>
    </alternativeName>
</protein>
<gene>
    <name evidence="1" type="primary">miaB</name>
    <name type="ordered locus">Rleg2_0019</name>
</gene>
<comment type="function">
    <text evidence="1">Catalyzes the methylthiolation of N6-(dimethylallyl)adenosine (i(6)A), leading to the formation of 2-methylthio-N6-(dimethylallyl)adenosine (ms(2)i(6)A) at position 37 in tRNAs that read codons beginning with uridine.</text>
</comment>
<comment type="catalytic activity">
    <reaction evidence="1">
        <text>N(6)-dimethylallyladenosine(37) in tRNA + (sulfur carrier)-SH + AH2 + 2 S-adenosyl-L-methionine = 2-methylsulfanyl-N(6)-dimethylallyladenosine(37) in tRNA + (sulfur carrier)-H + 5'-deoxyadenosine + L-methionine + A + S-adenosyl-L-homocysteine + 2 H(+)</text>
        <dbReference type="Rhea" id="RHEA:37067"/>
        <dbReference type="Rhea" id="RHEA-COMP:10375"/>
        <dbReference type="Rhea" id="RHEA-COMP:10376"/>
        <dbReference type="Rhea" id="RHEA-COMP:14737"/>
        <dbReference type="Rhea" id="RHEA-COMP:14739"/>
        <dbReference type="ChEBI" id="CHEBI:13193"/>
        <dbReference type="ChEBI" id="CHEBI:15378"/>
        <dbReference type="ChEBI" id="CHEBI:17319"/>
        <dbReference type="ChEBI" id="CHEBI:17499"/>
        <dbReference type="ChEBI" id="CHEBI:29917"/>
        <dbReference type="ChEBI" id="CHEBI:57844"/>
        <dbReference type="ChEBI" id="CHEBI:57856"/>
        <dbReference type="ChEBI" id="CHEBI:59789"/>
        <dbReference type="ChEBI" id="CHEBI:64428"/>
        <dbReference type="ChEBI" id="CHEBI:74415"/>
        <dbReference type="ChEBI" id="CHEBI:74417"/>
        <dbReference type="EC" id="2.8.4.3"/>
    </reaction>
</comment>
<comment type="cofactor">
    <cofactor evidence="1">
        <name>[4Fe-4S] cluster</name>
        <dbReference type="ChEBI" id="CHEBI:49883"/>
    </cofactor>
    <text evidence="1">Binds 2 [4Fe-4S] clusters. One cluster is coordinated with 3 cysteines and an exchangeable S-adenosyl-L-methionine.</text>
</comment>
<comment type="subunit">
    <text evidence="1">Monomer.</text>
</comment>
<comment type="subcellular location">
    <subcellularLocation>
        <location evidence="1">Cytoplasm</location>
    </subcellularLocation>
</comment>
<comment type="similarity">
    <text evidence="1">Belongs to the methylthiotransferase family. MiaB subfamily.</text>
</comment>
<sequence>MTQDNALLQAPELTLRDGSNSRKVFIKTYGCQMNVYDSTRMSDALARDGYEPTEDMEEADLVLLNTCHIREKAAEKVYSALGRLRDMKKKKAADGREMMIGVAGCVAQAEGEEILRRAPAVDVVIGPQTYHRLPEALRRAKEGQRVVDTDYAIEDKFEHLPIAESRKIRARGVTAFLTVQEGCDKFCTFCVVPYTRGSEVSRPVAQIVEEAEKLVEGGVREITLLGQNVNAWHGAGPRGEAWSLGDLLYRLAEIPGLARLRYTTSHPRDMDDRLIDAHRDLRALMPYLHLPVQSGSDRILKAMNRRHTAAEYLSLIARIRTVRPDIALSGDFITGFPGETDADFEDTLRLVEEVRYAQAFSFKYSTRPGTPGAELKDQVPEQIKAERLERLQALLLKQQQEFAESCIGKEIDLLLEKPGRMPEQLIGRSPWLQSVNVDAKASQIGDIIKVRITGTGNNSLFAERAEAAV</sequence>
<accession>B5ZMY1</accession>
<reference key="1">
    <citation type="journal article" date="2010" name="Stand. Genomic Sci.">
        <title>Complete genome sequence of Rhizobium leguminosarum bv trifolii strain WSM2304, an effective microsymbiont of the South American clover Trifolium polymorphum.</title>
        <authorList>
            <person name="Reeve W."/>
            <person name="O'Hara G."/>
            <person name="Chain P."/>
            <person name="Ardley J."/>
            <person name="Brau L."/>
            <person name="Nandesena K."/>
            <person name="Tiwari R."/>
            <person name="Malfatti S."/>
            <person name="Kiss H."/>
            <person name="Lapidus A."/>
            <person name="Copeland A."/>
            <person name="Nolan M."/>
            <person name="Land M."/>
            <person name="Ivanova N."/>
            <person name="Mavromatis K."/>
            <person name="Markowitz V."/>
            <person name="Kyrpides N."/>
            <person name="Melino V."/>
            <person name="Denton M."/>
            <person name="Yates R."/>
            <person name="Howieson J."/>
        </authorList>
    </citation>
    <scope>NUCLEOTIDE SEQUENCE [LARGE SCALE GENOMIC DNA]</scope>
    <source>
        <strain>WSM2304</strain>
    </source>
</reference>
<evidence type="ECO:0000255" key="1">
    <source>
        <dbReference type="HAMAP-Rule" id="MF_01864"/>
    </source>
</evidence>
<evidence type="ECO:0000255" key="2">
    <source>
        <dbReference type="PROSITE-ProRule" id="PRU01266"/>
    </source>
</evidence>
<keyword id="KW-0004">4Fe-4S</keyword>
<keyword id="KW-0963">Cytoplasm</keyword>
<keyword id="KW-0408">Iron</keyword>
<keyword id="KW-0411">Iron-sulfur</keyword>
<keyword id="KW-0479">Metal-binding</keyword>
<keyword id="KW-1185">Reference proteome</keyword>
<keyword id="KW-0949">S-adenosyl-L-methionine</keyword>
<keyword id="KW-0808">Transferase</keyword>
<keyword id="KW-0819">tRNA processing</keyword>